<comment type="function">
    <text evidence="1">Activates KDO (a required 8-carbon sugar) for incorporation into bacterial lipopolysaccharide in Gram-negative bacteria.</text>
</comment>
<comment type="catalytic activity">
    <reaction evidence="1">
        <text>3-deoxy-alpha-D-manno-oct-2-ulosonate + CTP = CMP-3-deoxy-beta-D-manno-octulosonate + diphosphate</text>
        <dbReference type="Rhea" id="RHEA:23448"/>
        <dbReference type="ChEBI" id="CHEBI:33019"/>
        <dbReference type="ChEBI" id="CHEBI:37563"/>
        <dbReference type="ChEBI" id="CHEBI:85986"/>
        <dbReference type="ChEBI" id="CHEBI:85987"/>
        <dbReference type="EC" id="2.7.7.38"/>
    </reaction>
</comment>
<comment type="pathway">
    <text evidence="1">Nucleotide-sugar biosynthesis; CMP-3-deoxy-D-manno-octulosonate biosynthesis; CMP-3-deoxy-D-manno-octulosonate from 3-deoxy-D-manno-octulosonate and CTP: step 1/1.</text>
</comment>
<comment type="pathway">
    <text evidence="1">Bacterial outer membrane biogenesis; lipopolysaccharide biosynthesis.</text>
</comment>
<comment type="subcellular location">
    <subcellularLocation>
        <location evidence="1">Cytoplasm</location>
    </subcellularLocation>
</comment>
<comment type="similarity">
    <text evidence="1">Belongs to the KdsB family.</text>
</comment>
<organism>
    <name type="scientific">Helicobacter pylori (strain G27)</name>
    <dbReference type="NCBI Taxonomy" id="563041"/>
    <lineage>
        <taxon>Bacteria</taxon>
        <taxon>Pseudomonadati</taxon>
        <taxon>Campylobacterota</taxon>
        <taxon>Epsilonproteobacteria</taxon>
        <taxon>Campylobacterales</taxon>
        <taxon>Helicobacteraceae</taxon>
        <taxon>Helicobacter</taxon>
    </lineage>
</organism>
<reference key="1">
    <citation type="journal article" date="2009" name="J. Bacteriol.">
        <title>The complete genome sequence of Helicobacter pylori strain G27.</title>
        <authorList>
            <person name="Baltrus D.A."/>
            <person name="Amieva M.R."/>
            <person name="Covacci A."/>
            <person name="Lowe T.M."/>
            <person name="Merrell D.S."/>
            <person name="Ottemann K.M."/>
            <person name="Stein M."/>
            <person name="Salama N.R."/>
            <person name="Guillemin K."/>
        </authorList>
    </citation>
    <scope>NUCLEOTIDE SEQUENCE [LARGE SCALE GENOMIC DNA]</scope>
    <source>
        <strain>G27</strain>
    </source>
</reference>
<name>KDSB_HELPG</name>
<protein>
    <recommendedName>
        <fullName evidence="1">3-deoxy-manno-octulosonate cytidylyltransferase</fullName>
        <ecNumber evidence="1">2.7.7.38</ecNumber>
    </recommendedName>
    <alternativeName>
        <fullName evidence="1">CMP-2-keto-3-deoxyoctulosonic acid synthase</fullName>
        <shortName evidence="1">CKS</shortName>
        <shortName evidence="1">CMP-KDO synthase</shortName>
    </alternativeName>
</protein>
<proteinExistence type="inferred from homology"/>
<gene>
    <name evidence="1" type="primary">kdsB</name>
    <name type="ordered locus">HPG27_210</name>
</gene>
<evidence type="ECO:0000255" key="1">
    <source>
        <dbReference type="HAMAP-Rule" id="MF_00057"/>
    </source>
</evidence>
<dbReference type="EC" id="2.7.7.38" evidence="1"/>
<dbReference type="EMBL" id="CP001173">
    <property type="protein sequence ID" value="ACI26977.1"/>
    <property type="molecule type" value="Genomic_DNA"/>
</dbReference>
<dbReference type="RefSeq" id="WP_000584057.1">
    <property type="nucleotide sequence ID" value="NC_011333.1"/>
</dbReference>
<dbReference type="SMR" id="B5Z9Z7"/>
<dbReference type="KEGG" id="hpg:HPG27_210"/>
<dbReference type="HOGENOM" id="CLU_065038_0_1_7"/>
<dbReference type="UniPathway" id="UPA00030"/>
<dbReference type="UniPathway" id="UPA00358">
    <property type="reaction ID" value="UER00476"/>
</dbReference>
<dbReference type="Proteomes" id="UP000001735">
    <property type="component" value="Chromosome"/>
</dbReference>
<dbReference type="GO" id="GO:0005829">
    <property type="term" value="C:cytosol"/>
    <property type="evidence" value="ECO:0007669"/>
    <property type="project" value="TreeGrafter"/>
</dbReference>
<dbReference type="GO" id="GO:0008690">
    <property type="term" value="F:3-deoxy-manno-octulosonate cytidylyltransferase activity"/>
    <property type="evidence" value="ECO:0007669"/>
    <property type="project" value="UniProtKB-UniRule"/>
</dbReference>
<dbReference type="GO" id="GO:0033468">
    <property type="term" value="P:CMP-keto-3-deoxy-D-manno-octulosonic acid biosynthetic process"/>
    <property type="evidence" value="ECO:0007669"/>
    <property type="project" value="UniProtKB-UniRule"/>
</dbReference>
<dbReference type="GO" id="GO:0009103">
    <property type="term" value="P:lipopolysaccharide biosynthetic process"/>
    <property type="evidence" value="ECO:0007669"/>
    <property type="project" value="UniProtKB-UniRule"/>
</dbReference>
<dbReference type="CDD" id="cd02517">
    <property type="entry name" value="CMP-KDO-Synthetase"/>
    <property type="match status" value="1"/>
</dbReference>
<dbReference type="FunFam" id="3.90.550.10:FF:000222">
    <property type="entry name" value="3-deoxy-manno-octulosonate cytidylyltransferase"/>
    <property type="match status" value="1"/>
</dbReference>
<dbReference type="Gene3D" id="3.90.550.10">
    <property type="entry name" value="Spore Coat Polysaccharide Biosynthesis Protein SpsA, Chain A"/>
    <property type="match status" value="1"/>
</dbReference>
<dbReference type="HAMAP" id="MF_00057">
    <property type="entry name" value="KdsB"/>
    <property type="match status" value="1"/>
</dbReference>
<dbReference type="InterPro" id="IPR003329">
    <property type="entry name" value="Cytidylyl_trans"/>
</dbReference>
<dbReference type="InterPro" id="IPR004528">
    <property type="entry name" value="KdsB"/>
</dbReference>
<dbReference type="InterPro" id="IPR029044">
    <property type="entry name" value="Nucleotide-diphossugar_trans"/>
</dbReference>
<dbReference type="NCBIfam" id="TIGR00466">
    <property type="entry name" value="kdsB"/>
    <property type="match status" value="1"/>
</dbReference>
<dbReference type="NCBIfam" id="NF003952">
    <property type="entry name" value="PRK05450.1-5"/>
    <property type="match status" value="1"/>
</dbReference>
<dbReference type="PANTHER" id="PTHR42866">
    <property type="entry name" value="3-DEOXY-MANNO-OCTULOSONATE CYTIDYLYLTRANSFERASE"/>
    <property type="match status" value="1"/>
</dbReference>
<dbReference type="PANTHER" id="PTHR42866:SF2">
    <property type="entry name" value="3-DEOXY-MANNO-OCTULOSONATE CYTIDYLYLTRANSFERASE, MITOCHONDRIAL"/>
    <property type="match status" value="1"/>
</dbReference>
<dbReference type="Pfam" id="PF02348">
    <property type="entry name" value="CTP_transf_3"/>
    <property type="match status" value="1"/>
</dbReference>
<dbReference type="SUPFAM" id="SSF53448">
    <property type="entry name" value="Nucleotide-diphospho-sugar transferases"/>
    <property type="match status" value="1"/>
</dbReference>
<feature type="chain" id="PRO_1000091877" description="3-deoxy-manno-octulosonate cytidylyltransferase">
    <location>
        <begin position="1"/>
        <end position="243"/>
    </location>
</feature>
<keyword id="KW-0963">Cytoplasm</keyword>
<keyword id="KW-0448">Lipopolysaccharide biosynthesis</keyword>
<keyword id="KW-0548">Nucleotidyltransferase</keyword>
<keyword id="KW-1185">Reference proteome</keyword>
<keyword id="KW-0808">Transferase</keyword>
<sequence>MIIIPARLKSSRFENKVLEDIFGLPMVVRCAKNANLVDECVVACDDESIMQTCQKFHIKAVLTSKHHNSGTERCLEAVQILGLKNDERVLNLQGDEPFLEKEVILALLEATKNAPFMATCAKVIDEEQAKSPNLVKVVLDSQNNALYFSRSLIPFLRDFDAKRQTPLLGHIGIYGFHNKEILEELCALKPCVLEEIEKLEQLRALYYQKKILVKIVQSQSVGIDTQEDLQNALKIFSPDLLER</sequence>
<accession>B5Z9Z7</accession>